<comment type="function">
    <text evidence="1">Specifically methylates the uridine in position 2552 of 23S rRNA at the 2'-O position of the ribose in the fully assembled 50S ribosomal subunit.</text>
</comment>
<comment type="catalytic activity">
    <reaction evidence="1">
        <text>uridine(2552) in 23S rRNA + S-adenosyl-L-methionine = 2'-O-methyluridine(2552) in 23S rRNA + S-adenosyl-L-homocysteine + H(+)</text>
        <dbReference type="Rhea" id="RHEA:42720"/>
        <dbReference type="Rhea" id="RHEA-COMP:10202"/>
        <dbReference type="Rhea" id="RHEA-COMP:10203"/>
        <dbReference type="ChEBI" id="CHEBI:15378"/>
        <dbReference type="ChEBI" id="CHEBI:57856"/>
        <dbReference type="ChEBI" id="CHEBI:59789"/>
        <dbReference type="ChEBI" id="CHEBI:65315"/>
        <dbReference type="ChEBI" id="CHEBI:74478"/>
        <dbReference type="EC" id="2.1.1.166"/>
    </reaction>
</comment>
<comment type="subcellular location">
    <subcellularLocation>
        <location evidence="1">Cytoplasm</location>
    </subcellularLocation>
</comment>
<comment type="similarity">
    <text evidence="1">Belongs to the class I-like SAM-binding methyltransferase superfamily. RNA methyltransferase RlmE family.</text>
</comment>
<protein>
    <recommendedName>
        <fullName evidence="1">Ribosomal RNA large subunit methyltransferase E</fullName>
        <ecNumber evidence="1">2.1.1.166</ecNumber>
    </recommendedName>
    <alternativeName>
        <fullName evidence="1">23S rRNA Um2552 methyltransferase</fullName>
    </alternativeName>
    <alternativeName>
        <fullName evidence="1">rRNA (uridine-2'-O-)-methyltransferase</fullName>
    </alternativeName>
</protein>
<gene>
    <name evidence="1" type="primary">rlmE</name>
    <name evidence="1" type="synonym">ftsJ</name>
    <name evidence="1" type="synonym">rrmJ</name>
    <name type="ordered locus">A1C_01140</name>
</gene>
<organism>
    <name type="scientific">Rickettsia akari (strain Hartford)</name>
    <dbReference type="NCBI Taxonomy" id="293614"/>
    <lineage>
        <taxon>Bacteria</taxon>
        <taxon>Pseudomonadati</taxon>
        <taxon>Pseudomonadota</taxon>
        <taxon>Alphaproteobacteria</taxon>
        <taxon>Rickettsiales</taxon>
        <taxon>Rickettsiaceae</taxon>
        <taxon>Rickettsieae</taxon>
        <taxon>Rickettsia</taxon>
        <taxon>spotted fever group</taxon>
    </lineage>
</organism>
<accession>A8GMD3</accession>
<sequence length="227" mass="25664">MTNNLSGYRNKFVRVKTSKKRTVSSGNWLRRQLNDPYVAKARIEGFRSRAAYKLLEIHEKFKLFTPNMKIVDLGAAPGGWSQVASKLIKASDNSLNNKIISIDLLEIEPIIGVEFLQKDFFEENTEELIIQVLDGKADIVMSDMASNTTGHKATDHIRTLLLCEQAFEFALKVLKPSGHFIAKIFRGGAENELLNKVKCEFKTVKHFKPSSSRSESTEIYLVAINKK</sequence>
<evidence type="ECO:0000255" key="1">
    <source>
        <dbReference type="HAMAP-Rule" id="MF_01547"/>
    </source>
</evidence>
<keyword id="KW-0963">Cytoplasm</keyword>
<keyword id="KW-0489">Methyltransferase</keyword>
<keyword id="KW-0698">rRNA processing</keyword>
<keyword id="KW-0949">S-adenosyl-L-methionine</keyword>
<keyword id="KW-0808">Transferase</keyword>
<proteinExistence type="inferred from homology"/>
<feature type="chain" id="PRO_1000087704" description="Ribosomal RNA large subunit methyltransferase E">
    <location>
        <begin position="1"/>
        <end position="227"/>
    </location>
</feature>
<feature type="active site" description="Proton acceptor" evidence="1">
    <location>
        <position position="183"/>
    </location>
</feature>
<feature type="binding site" evidence="1">
    <location>
        <position position="78"/>
    </location>
    <ligand>
        <name>S-adenosyl-L-methionine</name>
        <dbReference type="ChEBI" id="CHEBI:59789"/>
    </ligand>
</feature>
<feature type="binding site" evidence="1">
    <location>
        <position position="80"/>
    </location>
    <ligand>
        <name>S-adenosyl-L-methionine</name>
        <dbReference type="ChEBI" id="CHEBI:59789"/>
    </ligand>
</feature>
<feature type="binding site" evidence="1">
    <location>
        <position position="103"/>
    </location>
    <ligand>
        <name>S-adenosyl-L-methionine</name>
        <dbReference type="ChEBI" id="CHEBI:59789"/>
    </ligand>
</feature>
<feature type="binding site" evidence="1">
    <location>
        <position position="119"/>
    </location>
    <ligand>
        <name>S-adenosyl-L-methionine</name>
        <dbReference type="ChEBI" id="CHEBI:59789"/>
    </ligand>
</feature>
<feature type="binding site" evidence="1">
    <location>
        <position position="143"/>
    </location>
    <ligand>
        <name>S-adenosyl-L-methionine</name>
        <dbReference type="ChEBI" id="CHEBI:59789"/>
    </ligand>
</feature>
<reference key="1">
    <citation type="submission" date="2007-09" db="EMBL/GenBank/DDBJ databases">
        <title>Complete genome sequence of Rickettsia akari.</title>
        <authorList>
            <person name="Madan A."/>
            <person name="Fahey J."/>
            <person name="Helton E."/>
            <person name="Ketteman M."/>
            <person name="Madan A."/>
            <person name="Rodrigues S."/>
            <person name="Sanchez A."/>
            <person name="Whiting M."/>
            <person name="Dasch G."/>
            <person name="Eremeeva M."/>
        </authorList>
    </citation>
    <scope>NUCLEOTIDE SEQUENCE [LARGE SCALE GENOMIC DNA]</scope>
    <source>
        <strain>Hartford</strain>
    </source>
</reference>
<dbReference type="EC" id="2.1.1.166" evidence="1"/>
<dbReference type="EMBL" id="CP000847">
    <property type="protein sequence ID" value="ABV74558.1"/>
    <property type="molecule type" value="Genomic_DNA"/>
</dbReference>
<dbReference type="RefSeq" id="WP_012013428.1">
    <property type="nucleotide sequence ID" value="NC_009881.1"/>
</dbReference>
<dbReference type="SMR" id="A8GMD3"/>
<dbReference type="STRING" id="293614.A1C_01140"/>
<dbReference type="KEGG" id="rak:A1C_01140"/>
<dbReference type="eggNOG" id="COG0293">
    <property type="taxonomic scope" value="Bacteria"/>
</dbReference>
<dbReference type="HOGENOM" id="CLU_009422_4_0_5"/>
<dbReference type="Proteomes" id="UP000006830">
    <property type="component" value="Chromosome"/>
</dbReference>
<dbReference type="GO" id="GO:0005737">
    <property type="term" value="C:cytoplasm"/>
    <property type="evidence" value="ECO:0007669"/>
    <property type="project" value="UniProtKB-SubCell"/>
</dbReference>
<dbReference type="GO" id="GO:0008650">
    <property type="term" value="F:rRNA (uridine-2'-O-)-methyltransferase activity"/>
    <property type="evidence" value="ECO:0007669"/>
    <property type="project" value="UniProtKB-UniRule"/>
</dbReference>
<dbReference type="FunFam" id="3.40.50.150:FF:000354">
    <property type="entry name" value="Ribosomal RNA large subunit methyltransferase E"/>
    <property type="match status" value="1"/>
</dbReference>
<dbReference type="Gene3D" id="3.40.50.150">
    <property type="entry name" value="Vaccinia Virus protein VP39"/>
    <property type="match status" value="1"/>
</dbReference>
<dbReference type="HAMAP" id="MF_01547">
    <property type="entry name" value="RNA_methyltr_E"/>
    <property type="match status" value="1"/>
</dbReference>
<dbReference type="InterPro" id="IPR050082">
    <property type="entry name" value="RNA_methyltr_RlmE"/>
</dbReference>
<dbReference type="InterPro" id="IPR002877">
    <property type="entry name" value="RNA_MeTrfase_FtsJ_dom"/>
</dbReference>
<dbReference type="InterPro" id="IPR015507">
    <property type="entry name" value="rRNA-MeTfrase_E"/>
</dbReference>
<dbReference type="InterPro" id="IPR029063">
    <property type="entry name" value="SAM-dependent_MTases_sf"/>
</dbReference>
<dbReference type="PANTHER" id="PTHR10920">
    <property type="entry name" value="RIBOSOMAL RNA METHYLTRANSFERASE"/>
    <property type="match status" value="1"/>
</dbReference>
<dbReference type="PANTHER" id="PTHR10920:SF18">
    <property type="entry name" value="RRNA METHYLTRANSFERASE 2, MITOCHONDRIAL"/>
    <property type="match status" value="1"/>
</dbReference>
<dbReference type="Pfam" id="PF01728">
    <property type="entry name" value="FtsJ"/>
    <property type="match status" value="1"/>
</dbReference>
<dbReference type="PIRSF" id="PIRSF005461">
    <property type="entry name" value="23S_rRNA_mtase"/>
    <property type="match status" value="1"/>
</dbReference>
<dbReference type="SUPFAM" id="SSF53335">
    <property type="entry name" value="S-adenosyl-L-methionine-dependent methyltransferases"/>
    <property type="match status" value="1"/>
</dbReference>
<name>RLME_RICAH</name>